<keyword id="KW-0997">Cell inner membrane</keyword>
<keyword id="KW-1003">Cell membrane</keyword>
<keyword id="KW-0472">Membrane</keyword>
<keyword id="KW-1185">Reference proteome</keyword>
<comment type="function">
    <text evidence="1">Could be involved in insertion of integral membrane proteins into the membrane.</text>
</comment>
<comment type="subcellular location">
    <subcellularLocation>
        <location evidence="1">Cell inner membrane</location>
        <topology evidence="1">Peripheral membrane protein</topology>
        <orientation evidence="1">Cytoplasmic side</orientation>
    </subcellularLocation>
</comment>
<comment type="similarity">
    <text evidence="1">Belongs to the UPF0161 family.</text>
</comment>
<sequence length="84" mass="9584">MTFYERTVDLGLRAYKLTLSPLIGRQCRFTPSCSEYTAAALKDHGPLKGSWLGLRRICRCNPFGGSGYDPPPPRHQPRKWKCEE</sequence>
<dbReference type="EMBL" id="AE005673">
    <property type="protein sequence ID" value="AAK22450.1"/>
    <property type="molecule type" value="Genomic_DNA"/>
</dbReference>
<dbReference type="PIR" id="F87306">
    <property type="entry name" value="F87306"/>
</dbReference>
<dbReference type="RefSeq" id="NP_419282.1">
    <property type="nucleotide sequence ID" value="NC_002696.2"/>
</dbReference>
<dbReference type="RefSeq" id="WP_010918351.1">
    <property type="nucleotide sequence ID" value="NC_002696.2"/>
</dbReference>
<dbReference type="STRING" id="190650.CC_0463"/>
<dbReference type="DNASU" id="941928"/>
<dbReference type="EnsemblBacteria" id="AAK22450">
    <property type="protein sequence ID" value="AAK22450"/>
    <property type="gene ID" value="CC_0463"/>
</dbReference>
<dbReference type="KEGG" id="ccr:CC_0463"/>
<dbReference type="PATRIC" id="fig|190650.5.peg.469"/>
<dbReference type="eggNOG" id="COG0759">
    <property type="taxonomic scope" value="Bacteria"/>
</dbReference>
<dbReference type="HOGENOM" id="CLU_144811_6_1_5"/>
<dbReference type="BioCyc" id="CAULO:CC0463-MONOMER"/>
<dbReference type="Proteomes" id="UP000001816">
    <property type="component" value="Chromosome"/>
</dbReference>
<dbReference type="GO" id="GO:0005886">
    <property type="term" value="C:plasma membrane"/>
    <property type="evidence" value="ECO:0007669"/>
    <property type="project" value="UniProtKB-SubCell"/>
</dbReference>
<dbReference type="HAMAP" id="MF_00386">
    <property type="entry name" value="UPF0161_YidD"/>
    <property type="match status" value="1"/>
</dbReference>
<dbReference type="InterPro" id="IPR002696">
    <property type="entry name" value="Membr_insert_effic_factor_YidD"/>
</dbReference>
<dbReference type="NCBIfam" id="TIGR00278">
    <property type="entry name" value="membrane protein insertion efficiency factor YidD"/>
    <property type="match status" value="1"/>
</dbReference>
<dbReference type="PANTHER" id="PTHR33383">
    <property type="entry name" value="MEMBRANE PROTEIN INSERTION EFFICIENCY FACTOR-RELATED"/>
    <property type="match status" value="1"/>
</dbReference>
<dbReference type="PANTHER" id="PTHR33383:SF1">
    <property type="entry name" value="MEMBRANE PROTEIN INSERTION EFFICIENCY FACTOR-RELATED"/>
    <property type="match status" value="1"/>
</dbReference>
<dbReference type="Pfam" id="PF01809">
    <property type="entry name" value="YidD"/>
    <property type="match status" value="1"/>
</dbReference>
<dbReference type="SMART" id="SM01234">
    <property type="entry name" value="Haemolytic"/>
    <property type="match status" value="1"/>
</dbReference>
<evidence type="ECO:0000255" key="1">
    <source>
        <dbReference type="HAMAP-Rule" id="MF_00386"/>
    </source>
</evidence>
<evidence type="ECO:0000256" key="2">
    <source>
        <dbReference type="SAM" id="MobiDB-lite"/>
    </source>
</evidence>
<reference key="1">
    <citation type="journal article" date="2001" name="Proc. Natl. Acad. Sci. U.S.A.">
        <title>Complete genome sequence of Caulobacter crescentus.</title>
        <authorList>
            <person name="Nierman W.C."/>
            <person name="Feldblyum T.V."/>
            <person name="Laub M.T."/>
            <person name="Paulsen I.T."/>
            <person name="Nelson K.E."/>
            <person name="Eisen J.A."/>
            <person name="Heidelberg J.F."/>
            <person name="Alley M.R.K."/>
            <person name="Ohta N."/>
            <person name="Maddock J.R."/>
            <person name="Potocka I."/>
            <person name="Nelson W.C."/>
            <person name="Newton A."/>
            <person name="Stephens C."/>
            <person name="Phadke N.D."/>
            <person name="Ely B."/>
            <person name="DeBoy R.T."/>
            <person name="Dodson R.J."/>
            <person name="Durkin A.S."/>
            <person name="Gwinn M.L."/>
            <person name="Haft D.H."/>
            <person name="Kolonay J.F."/>
            <person name="Smit J."/>
            <person name="Craven M.B."/>
            <person name="Khouri H.M."/>
            <person name="Shetty J."/>
            <person name="Berry K.J."/>
            <person name="Utterback T.R."/>
            <person name="Tran K."/>
            <person name="Wolf A.M."/>
            <person name="Vamathevan J.J."/>
            <person name="Ermolaeva M.D."/>
            <person name="White O."/>
            <person name="Salzberg S.L."/>
            <person name="Venter J.C."/>
            <person name="Shapiro L."/>
            <person name="Fraser C.M."/>
        </authorList>
    </citation>
    <scope>NUCLEOTIDE SEQUENCE [LARGE SCALE GENOMIC DNA]</scope>
    <source>
        <strain>ATCC 19089 / CIP 103742 / CB 15</strain>
    </source>
</reference>
<accession>Q9AAX9</accession>
<organism>
    <name type="scientific">Caulobacter vibrioides (strain ATCC 19089 / CIP 103742 / CB 15)</name>
    <name type="common">Caulobacter crescentus</name>
    <dbReference type="NCBI Taxonomy" id="190650"/>
    <lineage>
        <taxon>Bacteria</taxon>
        <taxon>Pseudomonadati</taxon>
        <taxon>Pseudomonadota</taxon>
        <taxon>Alphaproteobacteria</taxon>
        <taxon>Caulobacterales</taxon>
        <taxon>Caulobacteraceae</taxon>
        <taxon>Caulobacter</taxon>
    </lineage>
</organism>
<name>YIDD_CAUVC</name>
<proteinExistence type="inferred from homology"/>
<gene>
    <name type="ordered locus">CC_0463</name>
</gene>
<protein>
    <recommendedName>
        <fullName evidence="1">Putative membrane protein insertion efficiency factor</fullName>
    </recommendedName>
</protein>
<feature type="chain" id="PRO_0000171807" description="Putative membrane protein insertion efficiency factor">
    <location>
        <begin position="1"/>
        <end position="84"/>
    </location>
</feature>
<feature type="region of interest" description="Disordered" evidence="2">
    <location>
        <begin position="64"/>
        <end position="84"/>
    </location>
</feature>
<feature type="compositionally biased region" description="Basic residues" evidence="2">
    <location>
        <begin position="75"/>
        <end position="84"/>
    </location>
</feature>